<evidence type="ECO:0000255" key="1">
    <source>
        <dbReference type="HAMAP-Rule" id="MF_00553"/>
    </source>
</evidence>
<gene>
    <name evidence="1" type="primary">pan</name>
    <name type="ordered locus">MTH_728</name>
</gene>
<proteinExistence type="inferred from homology"/>
<sequence length="410" mass="46111">MENNSQNVLKKIEDLKKEVRMLKEENSKTKRNLMWKIRKLEKDKLLIENERTRLDREVKSLRGEIERFRTPPLVIATVTEVLDDHRVAVKSTTGPHFVINYSRFIDRKQLEPGARVALNQQTFSIVDVLPSEKDPVVTGMEVEEKPDVSYEQIGGLEEQVREVKETVELPLKKPELFEKIGIEPPKGVLLYGPPGTGKTLLAKAVAHETNATFIKIVASEFVRKYIGEGARLVRGVFELAKEKSPSIIFIDEIDAVAAKRLKSSTSGDREVQRTLMQLLAELDGFESRGNVGIVAATNRPDILDPALLRPGRFDRFIEVPLPNEDGRREILKIHTSGMALAEEVDIELLARITDGASGADLKAICTEAGMFAIRDERDEVTMADFMDAVDKIMGVEKEEEYKQETGVMFG</sequence>
<name>PAN_METTH</name>
<keyword id="KW-0067">ATP-binding</keyword>
<keyword id="KW-0143">Chaperone</keyword>
<keyword id="KW-0175">Coiled coil</keyword>
<keyword id="KW-0963">Cytoplasm</keyword>
<keyword id="KW-0547">Nucleotide-binding</keyword>
<keyword id="KW-0647">Proteasome</keyword>
<keyword id="KW-1185">Reference proteome</keyword>
<accession>O26824</accession>
<feature type="chain" id="PRO_0000084747" description="Proteasome-activating nucleotidase">
    <location>
        <begin position="1"/>
        <end position="410"/>
    </location>
</feature>
<feature type="region of interest" description="Docks into pockets in the proteasome alpha-ring to cause gate opening" evidence="1">
    <location>
        <begin position="408"/>
        <end position="410"/>
    </location>
</feature>
<feature type="coiled-coil region" evidence="1">
    <location>
        <begin position="1"/>
        <end position="70"/>
    </location>
</feature>
<feature type="binding site" evidence="1">
    <location>
        <begin position="195"/>
        <end position="200"/>
    </location>
    <ligand>
        <name>ATP</name>
        <dbReference type="ChEBI" id="CHEBI:30616"/>
    </ligand>
</feature>
<feature type="binding site" evidence="1">
    <location>
        <position position="334"/>
    </location>
    <ligand>
        <name>ATP</name>
        <dbReference type="ChEBI" id="CHEBI:30616"/>
    </ligand>
</feature>
<comment type="function">
    <text evidence="1">ATPase which is responsible for recognizing, binding, unfolding and translocation of substrate proteins into the archaeal 20S proteasome core particle. Is essential for opening the gate of the 20S proteasome via an interaction with its C-terminus, thereby allowing substrate entry and access to the site of proteolysis. Thus, the C-termini of the proteasomal ATPase function like a 'key in a lock' to induce gate opening and therefore regulate proteolysis. Unfolding activity requires energy from ATP hydrolysis, whereas ATP binding alone promotes ATPase-20S proteasome association which triggers gate opening, and supports translocation of unfolded substrates.</text>
</comment>
<comment type="subunit">
    <text evidence="1">Homohexamer. The hexameric complex has a two-ring architecture resembling a top hat that caps the 20S proteasome core at one or both ends. Upon ATP-binding, the C-terminus of PAN interacts with the alpha-rings of the proteasome core by binding to the intersubunit pockets.</text>
</comment>
<comment type="subcellular location">
    <subcellularLocation>
        <location evidence="1">Cytoplasm</location>
    </subcellularLocation>
</comment>
<comment type="domain">
    <text evidence="1">Consists of three main regions, an N-terminal coiled-coil domain that may assist in substrate recognition, an interdomain involved in PAN hexamerization, and a C-terminal ATPase domain of the AAA type.</text>
</comment>
<comment type="similarity">
    <text evidence="1">Belongs to the AAA ATPase family.</text>
</comment>
<organism>
    <name type="scientific">Methanothermobacter thermautotrophicus (strain ATCC 29096 / DSM 1053 / JCM 10044 / NBRC 100330 / Delta H)</name>
    <name type="common">Methanobacterium thermoautotrophicum</name>
    <dbReference type="NCBI Taxonomy" id="187420"/>
    <lineage>
        <taxon>Archaea</taxon>
        <taxon>Methanobacteriati</taxon>
        <taxon>Methanobacteriota</taxon>
        <taxon>Methanomada group</taxon>
        <taxon>Methanobacteria</taxon>
        <taxon>Methanobacteriales</taxon>
        <taxon>Methanobacteriaceae</taxon>
        <taxon>Methanothermobacter</taxon>
    </lineage>
</organism>
<protein>
    <recommendedName>
        <fullName evidence="1">Proteasome-activating nucleotidase</fullName>
        <shortName evidence="1">PAN</shortName>
    </recommendedName>
    <alternativeName>
        <fullName evidence="1">Proteasomal ATPase</fullName>
    </alternativeName>
    <alternativeName>
        <fullName evidence="1">Proteasome regulatory ATPase</fullName>
    </alternativeName>
    <alternativeName>
        <fullName evidence="1">Proteasome regulatory particle</fullName>
    </alternativeName>
</protein>
<dbReference type="EMBL" id="AE000666">
    <property type="protein sequence ID" value="AAB85233.1"/>
    <property type="molecule type" value="Genomic_DNA"/>
</dbReference>
<dbReference type="PIR" id="C69197">
    <property type="entry name" value="C69197"/>
</dbReference>
<dbReference type="RefSeq" id="WP_010876367.1">
    <property type="nucleotide sequence ID" value="NC_000916.1"/>
</dbReference>
<dbReference type="SMR" id="O26824"/>
<dbReference type="FunCoup" id="O26824">
    <property type="interactions" value="119"/>
</dbReference>
<dbReference type="IntAct" id="O26824">
    <property type="interactions" value="1"/>
</dbReference>
<dbReference type="STRING" id="187420.MTH_728"/>
<dbReference type="PaxDb" id="187420-MTH_728"/>
<dbReference type="EnsemblBacteria" id="AAB85233">
    <property type="protein sequence ID" value="AAB85233"/>
    <property type="gene ID" value="MTH_728"/>
</dbReference>
<dbReference type="GeneID" id="1470689"/>
<dbReference type="KEGG" id="mth:MTH_728"/>
<dbReference type="PATRIC" id="fig|187420.15.peg.714"/>
<dbReference type="HOGENOM" id="CLU_000688_2_0_2"/>
<dbReference type="InParanoid" id="O26824"/>
<dbReference type="Proteomes" id="UP000005223">
    <property type="component" value="Chromosome"/>
</dbReference>
<dbReference type="GO" id="GO:0005737">
    <property type="term" value="C:cytoplasm"/>
    <property type="evidence" value="ECO:0007669"/>
    <property type="project" value="UniProtKB-SubCell"/>
</dbReference>
<dbReference type="GO" id="GO:0022623">
    <property type="term" value="C:proteasome-activating nucleotidase complex"/>
    <property type="evidence" value="ECO:0007669"/>
    <property type="project" value="UniProtKB-UniRule"/>
</dbReference>
<dbReference type="GO" id="GO:0005524">
    <property type="term" value="F:ATP binding"/>
    <property type="evidence" value="ECO:0007669"/>
    <property type="project" value="UniProtKB-UniRule"/>
</dbReference>
<dbReference type="GO" id="GO:0016887">
    <property type="term" value="F:ATP hydrolysis activity"/>
    <property type="evidence" value="ECO:0007669"/>
    <property type="project" value="UniProtKB-UniRule"/>
</dbReference>
<dbReference type="GO" id="GO:0010498">
    <property type="term" value="P:proteasomal protein catabolic process"/>
    <property type="evidence" value="ECO:0007669"/>
    <property type="project" value="UniProtKB-UniRule"/>
</dbReference>
<dbReference type="GO" id="GO:0043335">
    <property type="term" value="P:protein unfolding"/>
    <property type="evidence" value="ECO:0007669"/>
    <property type="project" value="UniProtKB-UniRule"/>
</dbReference>
<dbReference type="CDD" id="cd19502">
    <property type="entry name" value="RecA-like_PAN_like"/>
    <property type="match status" value="1"/>
</dbReference>
<dbReference type="FunFam" id="3.40.50.300:FF:000033">
    <property type="entry name" value="26S protease regulatory subunit 6B"/>
    <property type="match status" value="1"/>
</dbReference>
<dbReference type="FunFam" id="1.10.8.60:FF:000006">
    <property type="entry name" value="26S protease regulatory subunit 8"/>
    <property type="match status" value="1"/>
</dbReference>
<dbReference type="Gene3D" id="1.10.8.60">
    <property type="match status" value="1"/>
</dbReference>
<dbReference type="Gene3D" id="2.40.50.140">
    <property type="entry name" value="Nucleic acid-binding proteins"/>
    <property type="match status" value="1"/>
</dbReference>
<dbReference type="Gene3D" id="3.40.50.300">
    <property type="entry name" value="P-loop containing nucleotide triphosphate hydrolases"/>
    <property type="match status" value="1"/>
</dbReference>
<dbReference type="HAMAP" id="MF_00553">
    <property type="entry name" value="PAN"/>
    <property type="match status" value="1"/>
</dbReference>
<dbReference type="InterPro" id="IPR050221">
    <property type="entry name" value="26S_Proteasome_ATPase"/>
</dbReference>
<dbReference type="InterPro" id="IPR003593">
    <property type="entry name" value="AAA+_ATPase"/>
</dbReference>
<dbReference type="InterPro" id="IPR041569">
    <property type="entry name" value="AAA_lid_3"/>
</dbReference>
<dbReference type="InterPro" id="IPR003959">
    <property type="entry name" value="ATPase_AAA_core"/>
</dbReference>
<dbReference type="InterPro" id="IPR003960">
    <property type="entry name" value="ATPase_AAA_CS"/>
</dbReference>
<dbReference type="InterPro" id="IPR012340">
    <property type="entry name" value="NA-bd_OB-fold"/>
</dbReference>
<dbReference type="InterPro" id="IPR023501">
    <property type="entry name" value="Nucleotidase_PAN"/>
</dbReference>
<dbReference type="InterPro" id="IPR027417">
    <property type="entry name" value="P-loop_NTPase"/>
</dbReference>
<dbReference type="InterPro" id="IPR032501">
    <property type="entry name" value="Prot_ATP_ID_OB_2nd"/>
</dbReference>
<dbReference type="NCBIfam" id="NF003069">
    <property type="entry name" value="PRK03992.1"/>
    <property type="match status" value="1"/>
</dbReference>
<dbReference type="NCBIfam" id="TIGR01242">
    <property type="entry name" value="proteasome-activating nucleotidase"/>
    <property type="match status" value="1"/>
</dbReference>
<dbReference type="PANTHER" id="PTHR23073">
    <property type="entry name" value="26S PROTEASOME REGULATORY SUBUNIT"/>
    <property type="match status" value="1"/>
</dbReference>
<dbReference type="Pfam" id="PF00004">
    <property type="entry name" value="AAA"/>
    <property type="match status" value="1"/>
</dbReference>
<dbReference type="Pfam" id="PF17862">
    <property type="entry name" value="AAA_lid_3"/>
    <property type="match status" value="1"/>
</dbReference>
<dbReference type="Pfam" id="PF16450">
    <property type="entry name" value="Prot_ATP_ID_OB_C"/>
    <property type="match status" value="1"/>
</dbReference>
<dbReference type="SMART" id="SM00382">
    <property type="entry name" value="AAA"/>
    <property type="match status" value="1"/>
</dbReference>
<dbReference type="SUPFAM" id="SSF52540">
    <property type="entry name" value="P-loop containing nucleoside triphosphate hydrolases"/>
    <property type="match status" value="1"/>
</dbReference>
<dbReference type="PROSITE" id="PS00674">
    <property type="entry name" value="AAA"/>
    <property type="match status" value="1"/>
</dbReference>
<reference key="1">
    <citation type="journal article" date="1997" name="J. Bacteriol.">
        <title>Complete genome sequence of Methanobacterium thermoautotrophicum deltaH: functional analysis and comparative genomics.</title>
        <authorList>
            <person name="Smith D.R."/>
            <person name="Doucette-Stamm L.A."/>
            <person name="Deloughery C."/>
            <person name="Lee H.-M."/>
            <person name="Dubois J."/>
            <person name="Aldredge T."/>
            <person name="Bashirzadeh R."/>
            <person name="Blakely D."/>
            <person name="Cook R."/>
            <person name="Gilbert K."/>
            <person name="Harrison D."/>
            <person name="Hoang L."/>
            <person name="Keagle P."/>
            <person name="Lumm W."/>
            <person name="Pothier B."/>
            <person name="Qiu D."/>
            <person name="Spadafora R."/>
            <person name="Vicare R."/>
            <person name="Wang Y."/>
            <person name="Wierzbowski J."/>
            <person name="Gibson R."/>
            <person name="Jiwani N."/>
            <person name="Caruso A."/>
            <person name="Bush D."/>
            <person name="Safer H."/>
            <person name="Patwell D."/>
            <person name="Prabhakar S."/>
            <person name="McDougall S."/>
            <person name="Shimer G."/>
            <person name="Goyal A."/>
            <person name="Pietrovski S."/>
            <person name="Church G.M."/>
            <person name="Daniels C.J."/>
            <person name="Mao J.-I."/>
            <person name="Rice P."/>
            <person name="Noelling J."/>
            <person name="Reeve J.N."/>
        </authorList>
    </citation>
    <scope>NUCLEOTIDE SEQUENCE [LARGE SCALE GENOMIC DNA]</scope>
    <source>
        <strain>ATCC 29096 / DSM 1053 / JCM 10044 / NBRC 100330 / Delta H</strain>
    </source>
</reference>